<keyword id="KW-0175">Coiled coil</keyword>
<keyword id="KW-0967">Endosome</keyword>
<keyword id="KW-0472">Membrane</keyword>
<keyword id="KW-0597">Phosphoprotein</keyword>
<keyword id="KW-1185">Reference proteome</keyword>
<keyword id="KW-0677">Repeat</keyword>
<keyword id="KW-0853">WD repeat</keyword>
<sequence>MAEAVERTDELVREYLLFRGFTHTLRQLDAEIKADKEKGFRVDKIVDQLQQLMQVYDLAALRDYWSYLERRLFSRLEDIYRPTINKLKTSLFRFYLVYTIQTNRNDKAQEFFAKQATELQNQAEWKDWFVLPFLPSPDTNPTFATYFSRQWADTFIISLHNFLSVLFQCMPVPVILNFDAECQRTNQVQEENEVLRQKLFALQAEIHRLKKEEQQQEEEAAALVQHKLPPYVSSMDRLGDSELALVCSQRPASLSQSPRVGFLSSLLPQSKKSPSRLSPAQGPPQAQSSAKKDSFSSQATKGKDSVPGAKDGKSLLSGPVPGEASWTHQRQRRLQDHGKERRELLSTSSSQSQCAERKPEVSGAEAEPCLELHMGPVEVLARVSTAGSEGDRPEQPFIVLSQEEYGEHHSSIMHCRVDCSGRRVASLDVDGVIKVWSFNPIMQTKASSISKSPLLSLEWATKRDRLLLLGSGVGTVRLYDTEAKKNLCEININDDMPRILSLACSPNGASFVCSAAAPSLTSQTDSSAPDIGSKGMNQVPGKLLLWDTKTMKQQLQFSLDPEPIAINCTAFNHNGNLLVTGAADGVIRLFDMQQHECAMSWKAHCGEVYSVEFSCDENAVYSIGEDRKFIQWNIHKSGLKVSESNLPSDATGPFVLSGYSGYKQVQVPRGRLFAFDSEGNYMLTCSATGGLIYKLGSEEKVLENCLSLGGHRAPVVTVDWSTAMDCGTCLTASMDGKIKLTTLLAHKL</sequence>
<organism>
    <name type="scientific">Mus musculus</name>
    <name type="common">Mouse</name>
    <dbReference type="NCBI Taxonomy" id="10090"/>
    <lineage>
        <taxon>Eukaryota</taxon>
        <taxon>Metazoa</taxon>
        <taxon>Chordata</taxon>
        <taxon>Craniata</taxon>
        <taxon>Vertebrata</taxon>
        <taxon>Euteleostomi</taxon>
        <taxon>Mammalia</taxon>
        <taxon>Eutheria</taxon>
        <taxon>Euarchontoglires</taxon>
        <taxon>Glires</taxon>
        <taxon>Rodentia</taxon>
        <taxon>Myomorpha</taxon>
        <taxon>Muroidea</taxon>
        <taxon>Muridae</taxon>
        <taxon>Murinae</taxon>
        <taxon>Mus</taxon>
        <taxon>Mus</taxon>
    </lineage>
</organism>
<evidence type="ECO:0000250" key="1">
    <source>
        <dbReference type="UniProtKB" id="A4D1P6"/>
    </source>
</evidence>
<evidence type="ECO:0000255" key="2"/>
<evidence type="ECO:0000256" key="3">
    <source>
        <dbReference type="SAM" id="MobiDB-lite"/>
    </source>
</evidence>
<evidence type="ECO:0000269" key="4">
    <source>
    </source>
</evidence>
<evidence type="ECO:0000305" key="5"/>
<evidence type="ECO:0000312" key="6">
    <source>
        <dbReference type="MGI" id="MGI:2141558"/>
    </source>
</evidence>
<evidence type="ECO:0007744" key="7">
    <source>
    </source>
</evidence>
<protein>
    <recommendedName>
        <fullName evidence="6">WD repeat-containing protein 91</fullName>
    </recommendedName>
</protein>
<proteinExistence type="evidence at protein level"/>
<reference key="1">
    <citation type="journal article" date="2004" name="Genome Res.">
        <title>The status, quality, and expansion of the NIH full-length cDNA project: the Mammalian Gene Collection (MGC).</title>
        <authorList>
            <consortium name="The MGC Project Team"/>
        </authorList>
    </citation>
    <scope>NUCLEOTIDE SEQUENCE [LARGE SCALE MRNA]</scope>
    <source>
        <strain>FVB/N</strain>
        <strain>FVB/N-3</strain>
        <tissue>Liver</tissue>
        <tissue>Mammary tumor</tissue>
    </source>
</reference>
<reference key="2">
    <citation type="journal article" date="2007" name="Proc. Natl. Acad. Sci. U.S.A.">
        <title>Large-scale phosphorylation analysis of mouse liver.</title>
        <authorList>
            <person name="Villen J."/>
            <person name="Beausoleil S.A."/>
            <person name="Gerber S.A."/>
            <person name="Gygi S.P."/>
        </authorList>
    </citation>
    <scope>IDENTIFICATION BY MASS SPECTROMETRY [LARGE SCALE ANALYSIS]</scope>
    <source>
        <tissue>Liver</tissue>
    </source>
</reference>
<reference key="3">
    <citation type="journal article" date="2009" name="Immunity">
        <title>The phagosomal proteome in interferon-gamma-activated macrophages.</title>
        <authorList>
            <person name="Trost M."/>
            <person name="English L."/>
            <person name="Lemieux S."/>
            <person name="Courcelles M."/>
            <person name="Desjardins M."/>
            <person name="Thibault P."/>
        </authorList>
    </citation>
    <scope>PHOSPHORYLATION [LARGE SCALE ANALYSIS] AT SER-294</scope>
    <scope>IDENTIFICATION BY MASS SPECTROMETRY [LARGE SCALE ANALYSIS]</scope>
</reference>
<reference key="4">
    <citation type="journal article" date="2010" name="Cell">
        <title>A tissue-specific atlas of mouse protein phosphorylation and expression.</title>
        <authorList>
            <person name="Huttlin E.L."/>
            <person name="Jedrychowski M.P."/>
            <person name="Elias J.E."/>
            <person name="Goswami T."/>
            <person name="Rad R."/>
            <person name="Beausoleil S.A."/>
            <person name="Villen J."/>
            <person name="Haas W."/>
            <person name="Sowa M.E."/>
            <person name="Gygi S.P."/>
        </authorList>
    </citation>
    <scope>IDENTIFICATION BY MASS SPECTROMETRY [LARGE SCALE ANALYSIS]</scope>
    <source>
        <tissue>Brain</tissue>
        <tissue>Kidney</tissue>
        <tissue>Lung</tissue>
        <tissue>Spleen</tissue>
        <tissue>Testis</tissue>
    </source>
</reference>
<reference key="5">
    <citation type="journal article" date="2016" name="Stem Cell Reports">
        <title>Retinoic Acid is sufficient for the in vitro induction of mouse spermatocytes.</title>
        <authorList>
            <person name="Wang S."/>
            <person name="Wang X."/>
            <person name="Ma L."/>
            <person name="Lin X."/>
            <person name="Zhang D."/>
            <person name="Li Z."/>
            <person name="Wu Y."/>
            <person name="Zheng C."/>
            <person name="Feng X."/>
            <person name="Liao S."/>
            <person name="Feng Y."/>
            <person name="Chen J."/>
            <person name="Hu X."/>
            <person name="Wang M."/>
            <person name="Han C."/>
        </authorList>
    </citation>
    <scope>FUNCTION</scope>
</reference>
<dbReference type="EMBL" id="BC043682">
    <property type="protein sequence ID" value="AAH43682.1"/>
    <property type="molecule type" value="mRNA"/>
</dbReference>
<dbReference type="EMBL" id="BC055046">
    <property type="protein sequence ID" value="AAH55046.1"/>
    <property type="molecule type" value="mRNA"/>
</dbReference>
<dbReference type="CCDS" id="CCDS39457.1"/>
<dbReference type="RefSeq" id="NP_001013384.1">
    <property type="nucleotide sequence ID" value="NM_001013366.1"/>
</dbReference>
<dbReference type="SMR" id="Q7TMQ7"/>
<dbReference type="BioGRID" id="221616">
    <property type="interactions" value="2"/>
</dbReference>
<dbReference type="FunCoup" id="Q7TMQ7">
    <property type="interactions" value="1018"/>
</dbReference>
<dbReference type="IntAct" id="Q7TMQ7">
    <property type="interactions" value="1"/>
</dbReference>
<dbReference type="STRING" id="10090.ENSMUSP00000079974"/>
<dbReference type="iPTMnet" id="Q7TMQ7"/>
<dbReference type="PhosphoSitePlus" id="Q7TMQ7"/>
<dbReference type="SwissPalm" id="Q7TMQ7"/>
<dbReference type="jPOST" id="Q7TMQ7"/>
<dbReference type="PaxDb" id="10090-ENSMUSP00000079974"/>
<dbReference type="PeptideAtlas" id="Q7TMQ7"/>
<dbReference type="ProteomicsDB" id="297554"/>
<dbReference type="Pumba" id="Q7TMQ7"/>
<dbReference type="Antibodypedia" id="18119">
    <property type="antibodies" value="87 antibodies from 15 providers"/>
</dbReference>
<dbReference type="DNASU" id="101240"/>
<dbReference type="Ensembl" id="ENSMUST00000081214.12">
    <property type="protein sequence ID" value="ENSMUSP00000079974.6"/>
    <property type="gene ID" value="ENSMUSG00000058486.12"/>
</dbReference>
<dbReference type="GeneID" id="101240"/>
<dbReference type="KEGG" id="mmu:101240"/>
<dbReference type="UCSC" id="uc009bhz.1">
    <property type="organism name" value="mouse"/>
</dbReference>
<dbReference type="AGR" id="MGI:2141558"/>
<dbReference type="CTD" id="29062"/>
<dbReference type="MGI" id="MGI:2141558">
    <property type="gene designation" value="Wdr91"/>
</dbReference>
<dbReference type="VEuPathDB" id="HostDB:ENSMUSG00000058486"/>
<dbReference type="eggNOG" id="KOG1333">
    <property type="taxonomic scope" value="Eukaryota"/>
</dbReference>
<dbReference type="GeneTree" id="ENSGT00390000001566"/>
<dbReference type="HOGENOM" id="CLU_022078_0_0_1"/>
<dbReference type="InParanoid" id="Q7TMQ7"/>
<dbReference type="OMA" id="KMYLVNA"/>
<dbReference type="OrthoDB" id="193023at2759"/>
<dbReference type="PhylomeDB" id="Q7TMQ7"/>
<dbReference type="TreeFam" id="TF317339"/>
<dbReference type="BioGRID-ORCS" id="101240">
    <property type="hits" value="6 hits in 80 CRISPR screens"/>
</dbReference>
<dbReference type="ChiTaRS" id="Wdr91">
    <property type="organism name" value="mouse"/>
</dbReference>
<dbReference type="PRO" id="PR:Q7TMQ7"/>
<dbReference type="Proteomes" id="UP000000589">
    <property type="component" value="Chromosome 6"/>
</dbReference>
<dbReference type="RNAct" id="Q7TMQ7">
    <property type="molecule type" value="protein"/>
</dbReference>
<dbReference type="Bgee" id="ENSMUSG00000058486">
    <property type="expression patterns" value="Expressed in animal zygote and 219 other cell types or tissues"/>
</dbReference>
<dbReference type="ExpressionAtlas" id="Q7TMQ7">
    <property type="expression patterns" value="baseline and differential"/>
</dbReference>
<dbReference type="GO" id="GO:0005829">
    <property type="term" value="C:cytosol"/>
    <property type="evidence" value="ECO:0000250"/>
    <property type="project" value="UniProtKB"/>
</dbReference>
<dbReference type="GO" id="GO:0031901">
    <property type="term" value="C:early endosome membrane"/>
    <property type="evidence" value="ECO:0000250"/>
    <property type="project" value="UniProtKB"/>
</dbReference>
<dbReference type="GO" id="GO:0010008">
    <property type="term" value="C:endosome membrane"/>
    <property type="evidence" value="ECO:0000250"/>
    <property type="project" value="UniProtKB"/>
</dbReference>
<dbReference type="GO" id="GO:0031902">
    <property type="term" value="C:late endosome membrane"/>
    <property type="evidence" value="ECO:0000250"/>
    <property type="project" value="UniProtKB"/>
</dbReference>
<dbReference type="GO" id="GO:0141039">
    <property type="term" value="F:phosphatidylinositol 3-kinase inhibitor activity"/>
    <property type="evidence" value="ECO:0000250"/>
    <property type="project" value="UniProtKB"/>
</dbReference>
<dbReference type="GO" id="GO:0045022">
    <property type="term" value="P:early endosome to late endosome transport"/>
    <property type="evidence" value="ECO:0000250"/>
    <property type="project" value="UniProtKB"/>
</dbReference>
<dbReference type="GO" id="GO:0051898">
    <property type="term" value="P:negative regulation of phosphatidylinositol 3-kinase/protein kinase B signal transduction"/>
    <property type="evidence" value="ECO:0007669"/>
    <property type="project" value="InterPro"/>
</dbReference>
<dbReference type="GO" id="GO:0042176">
    <property type="term" value="P:regulation of protein catabolic process"/>
    <property type="evidence" value="ECO:0007669"/>
    <property type="project" value="Ensembl"/>
</dbReference>
<dbReference type="FunFam" id="2.130.10.10:FF:001230">
    <property type="entry name" value="WD repeat-containing protein 91"/>
    <property type="match status" value="1"/>
</dbReference>
<dbReference type="FunFam" id="2.130.10.10:FF:001788">
    <property type="entry name" value="WD repeat-containing protein 91"/>
    <property type="match status" value="1"/>
</dbReference>
<dbReference type="Gene3D" id="2.130.10.10">
    <property type="entry name" value="YVTN repeat-like/Quinoprotein amine dehydrogenase"/>
    <property type="match status" value="2"/>
</dbReference>
<dbReference type="InterPro" id="IPR056327">
    <property type="entry name" value="ARMC9_CTLH-like_dom"/>
</dbReference>
<dbReference type="InterPro" id="IPR015943">
    <property type="entry name" value="WD40/YVTN_repeat-like_dom_sf"/>
</dbReference>
<dbReference type="InterPro" id="IPR036322">
    <property type="entry name" value="WD40_repeat_dom_sf"/>
</dbReference>
<dbReference type="InterPro" id="IPR001680">
    <property type="entry name" value="WD40_rpt"/>
</dbReference>
<dbReference type="InterPro" id="IPR039724">
    <property type="entry name" value="WDR91"/>
</dbReference>
<dbReference type="PANTHER" id="PTHR13083">
    <property type="entry name" value="WD REPEAT-CONTAINING PROTEIN 91"/>
    <property type="match status" value="1"/>
</dbReference>
<dbReference type="PANTHER" id="PTHR13083:SF3">
    <property type="entry name" value="WD REPEAT-CONTAINING PROTEIN 91"/>
    <property type="match status" value="1"/>
</dbReference>
<dbReference type="Pfam" id="PF23138">
    <property type="entry name" value="CTLH_Armc9"/>
    <property type="match status" value="1"/>
</dbReference>
<dbReference type="Pfam" id="PF00400">
    <property type="entry name" value="WD40"/>
    <property type="match status" value="3"/>
</dbReference>
<dbReference type="SMART" id="SM00320">
    <property type="entry name" value="WD40"/>
    <property type="match status" value="5"/>
</dbReference>
<dbReference type="SUPFAM" id="SSF50978">
    <property type="entry name" value="WD40 repeat-like"/>
    <property type="match status" value="1"/>
</dbReference>
<dbReference type="PROSITE" id="PS50082">
    <property type="entry name" value="WD_REPEATS_2"/>
    <property type="match status" value="1"/>
</dbReference>
<dbReference type="PROSITE" id="PS50294">
    <property type="entry name" value="WD_REPEATS_REGION"/>
    <property type="match status" value="2"/>
</dbReference>
<accession>Q7TMQ7</accession>
<accession>Q80XN1</accession>
<gene>
    <name evidence="6" type="primary">Wdr91</name>
</gene>
<comment type="function">
    <text evidence="1 4">Functions as a negative regulator of the PI3 kinase/PI3K activity associated with endosomal membranes via BECN1, a core subunit of the PI3K complex. By modifying the phosphatidylinositol 3-phosphate/PtdInsP3 content of endosomal membranes may regulate endosome fusion, recycling, sorting and early to late endosome transport. It is for instance, required for the delivery of cargos like BST2/tetherin from early to late endosome and thereby participates indirectly to their degradation by the lysosome (By similarity). May play a role in meiosis (PubMed:27346680).</text>
</comment>
<comment type="subunit">
    <text evidence="1">Interacts with WDR81; involved in early to late endosome cargo transport. Interacts with BECN1; negatively regulates the PI3 kinase/PI3K activity associated with endosomal membranes.</text>
</comment>
<comment type="subcellular location">
    <subcellularLocation>
        <location evidence="1">Early endosome membrane</location>
        <topology evidence="1">Peripheral membrane protein</topology>
    </subcellularLocation>
    <subcellularLocation>
        <location evidence="1">Late endosome membrane</location>
    </subcellularLocation>
</comment>
<comment type="similarity">
    <text evidence="5">Belongs to the WD repeat WDR91 family.</text>
</comment>
<feature type="chain" id="PRO_0000295747" description="WD repeat-containing protein 91">
    <location>
        <begin position="1"/>
        <end position="748"/>
    </location>
</feature>
<feature type="repeat" description="WD 1">
    <location>
        <begin position="407"/>
        <end position="446"/>
    </location>
</feature>
<feature type="repeat" description="WD 2">
    <location>
        <begin position="449"/>
        <end position="489"/>
    </location>
</feature>
<feature type="repeat" description="WD 3">
    <location>
        <begin position="512"/>
        <end position="556"/>
    </location>
</feature>
<feature type="repeat" description="WD 4">
    <location>
        <begin position="561"/>
        <end position="600"/>
    </location>
</feature>
<feature type="repeat" description="WD 5">
    <location>
        <begin position="603"/>
        <end position="642"/>
    </location>
</feature>
<feature type="repeat" description="WD 6">
    <location>
        <begin position="665"/>
        <end position="703"/>
    </location>
</feature>
<feature type="repeat" description="WD 7">
    <location>
        <begin position="710"/>
        <end position="748"/>
    </location>
</feature>
<feature type="region of interest" description="Disordered" evidence="3">
    <location>
        <begin position="266"/>
        <end position="368"/>
    </location>
</feature>
<feature type="coiled-coil region" evidence="2">
    <location>
        <begin position="183"/>
        <end position="228"/>
    </location>
</feature>
<feature type="compositionally biased region" description="Low complexity" evidence="3">
    <location>
        <begin position="266"/>
        <end position="279"/>
    </location>
</feature>
<feature type="compositionally biased region" description="Polar residues" evidence="3">
    <location>
        <begin position="284"/>
        <end position="300"/>
    </location>
</feature>
<feature type="compositionally biased region" description="Basic and acidic residues" evidence="3">
    <location>
        <begin position="333"/>
        <end position="344"/>
    </location>
</feature>
<feature type="compositionally biased region" description="Polar residues" evidence="3">
    <location>
        <begin position="345"/>
        <end position="354"/>
    </location>
</feature>
<feature type="modified residue" description="Phosphoserine" evidence="1">
    <location>
        <position position="257"/>
    </location>
</feature>
<feature type="modified residue" description="Phosphoserine" evidence="1">
    <location>
        <position position="289"/>
    </location>
</feature>
<feature type="modified residue" description="Phosphoserine" evidence="7">
    <location>
        <position position="294"/>
    </location>
</feature>
<feature type="sequence conflict" description="In Ref. 1; AAH43682." evidence="5" ref="1">
    <original>F</original>
    <variation>L</variation>
    <location>
        <position position="590"/>
    </location>
</feature>
<name>WDR91_MOUSE</name>